<protein>
    <recommendedName>
        <fullName>Antitoxin MazE</fullName>
    </recommendedName>
</protein>
<sequence>MLSFSQNRSHSLEQSLKEGYSQMADLNLSLANEAFPIECEACDCNETYLSSNSTNE</sequence>
<feature type="chain" id="PRO_0000330711" description="Antitoxin MazE">
    <location>
        <begin position="1"/>
        <end position="56"/>
    </location>
</feature>
<proteinExistence type="inferred from homology"/>
<evidence type="ECO:0000250" key="1">
    <source>
        <dbReference type="UniProtKB" id="P0C7B4"/>
    </source>
</evidence>
<evidence type="ECO:0000305" key="2"/>
<organism>
    <name type="scientific">Staphylococcus aureus (strain COL)</name>
    <dbReference type="NCBI Taxonomy" id="93062"/>
    <lineage>
        <taxon>Bacteria</taxon>
        <taxon>Bacillati</taxon>
        <taxon>Bacillota</taxon>
        <taxon>Bacilli</taxon>
        <taxon>Bacillales</taxon>
        <taxon>Staphylococcaceae</taxon>
        <taxon>Staphylococcus</taxon>
    </lineage>
</organism>
<reference key="1">
    <citation type="journal article" date="2005" name="J. Bacteriol.">
        <title>Insights on evolution of virulence and resistance from the complete genome analysis of an early methicillin-resistant Staphylococcus aureus strain and a biofilm-producing methicillin-resistant Staphylococcus epidermidis strain.</title>
        <authorList>
            <person name="Gill S.R."/>
            <person name="Fouts D.E."/>
            <person name="Archer G.L."/>
            <person name="Mongodin E.F."/>
            <person name="DeBoy R.T."/>
            <person name="Ravel J."/>
            <person name="Paulsen I.T."/>
            <person name="Kolonay J.F."/>
            <person name="Brinkac L.M."/>
            <person name="Beanan M.J."/>
            <person name="Dodson R.J."/>
            <person name="Daugherty S.C."/>
            <person name="Madupu R."/>
            <person name="Angiuoli S.V."/>
            <person name="Durkin A.S."/>
            <person name="Haft D.H."/>
            <person name="Vamathevan J.J."/>
            <person name="Khouri H."/>
            <person name="Utterback T.R."/>
            <person name="Lee C."/>
            <person name="Dimitrov G."/>
            <person name="Jiang L."/>
            <person name="Qin H."/>
            <person name="Weidman J."/>
            <person name="Tran K."/>
            <person name="Kang K.H."/>
            <person name="Hance I.R."/>
            <person name="Nelson K.E."/>
            <person name="Fraser C.M."/>
        </authorList>
    </citation>
    <scope>NUCLEOTIDE SEQUENCE [LARGE SCALE GENOMIC DNA]</scope>
    <source>
        <strain>COL</strain>
    </source>
</reference>
<reference key="2">
    <citation type="journal article" date="1996" name="J. Bacteriol.">
        <title>Sigma-B, a putative operon encoding alternate sigma factor of Staphylococcus aureus RNA polymerase: molecular cloning and DNA sequencing.</title>
        <authorList>
            <person name="Wu S.-W."/>
            <person name="de Lencastre H."/>
            <person name="Tomasz A."/>
        </authorList>
    </citation>
    <scope>NUCLEOTIDE SEQUENCE [GENOMIC DNA] OF 34-56</scope>
</reference>
<accession>Q5HED2</accession>
<accession>P95839</accession>
<name>MAZE_STAAC</name>
<comment type="function">
    <text evidence="1">Antitoxin component of a type II toxin-antitoxin (TA) system. Labile antitoxin that binds to cognate MazF toxin and counteracts its endoribonuclease activity.</text>
</comment>
<comment type="subunit">
    <text evidence="1">Forms a complex with cognate toxin MazF which inhibits the endoribonuclease activity of MazF.</text>
</comment>
<comment type="similarity">
    <text evidence="2">Belongs to the MazE/EndoAI family.</text>
</comment>
<dbReference type="EMBL" id="CP000046">
    <property type="protein sequence ID" value="AAW37021.1"/>
    <property type="molecule type" value="Genomic_DNA"/>
</dbReference>
<dbReference type="EMBL" id="Y09929">
    <property type="protein sequence ID" value="CAA71063.1"/>
    <property type="molecule type" value="Genomic_DNA"/>
</dbReference>
<dbReference type="RefSeq" id="WP_000948331.1">
    <property type="nucleotide sequence ID" value="NZ_JBGOFO010000007.1"/>
</dbReference>
<dbReference type="SMR" id="Q5HED2"/>
<dbReference type="GeneID" id="98346377"/>
<dbReference type="KEGG" id="sac:SACOL2059"/>
<dbReference type="HOGENOM" id="CLU_3012108_0_0_9"/>
<dbReference type="Proteomes" id="UP000000530">
    <property type="component" value="Chromosome"/>
</dbReference>
<dbReference type="GO" id="GO:0006355">
    <property type="term" value="P:regulation of DNA-templated transcription"/>
    <property type="evidence" value="ECO:0007669"/>
    <property type="project" value="InterPro"/>
</dbReference>
<dbReference type="Gene3D" id="1.10.1220.10">
    <property type="entry name" value="Met repressor-like"/>
    <property type="match status" value="1"/>
</dbReference>
<dbReference type="InterPro" id="IPR013321">
    <property type="entry name" value="Arc_rbn_hlx_hlx"/>
</dbReference>
<dbReference type="InterPro" id="IPR048242">
    <property type="entry name" value="MazE"/>
</dbReference>
<dbReference type="NCBIfam" id="NF041459">
    <property type="entry name" value="antitoxMazE_Staph"/>
    <property type="match status" value="1"/>
</dbReference>
<gene>
    <name type="primary">mazE</name>
    <name type="ordered locus">SACOL2059</name>
</gene>
<keyword id="KW-1277">Toxin-antitoxin system</keyword>